<accession>Q86607</accession>
<comment type="function">
    <text evidence="1">Stimulates cellular proliferation (hyperplasia)and mobility around infected cells to promote rapid and efficient spread of infection. This effect is beneficial for virus replication in vivo, because poxviruses replicate possibly better in proliferating cells than in quiescent cells. Acts by binding host EGFR, inducing its dimerization, autophosphorylation and leading to activation of several cellular pathways regulating cell proliferation or cell survival. The activation by host EGFR of mitogen activated protein kinases (MAPK) and extracellular-signal regulated kinases (ERK) are essential for the positive effect of vaccinia growth factor on poxvirus virulence in vivo (By similarity).</text>
</comment>
<comment type="subunit">
    <text evidence="2">Vaccinia growth factor interacts with host EGFR and promotes EGFR dimerization.</text>
</comment>
<comment type="subcellular location">
    <molecule>Pro-vaccinia growth factor</molecule>
    <subcellularLocation>
        <location evidence="2">Host membrane</location>
        <topology evidence="2">Single-pass type I membrane protein</topology>
    </subcellularLocation>
</comment>
<comment type="subcellular location">
    <molecule>Vaccinia growth factor</molecule>
    <subcellularLocation>
        <location evidence="2">Secreted</location>
    </subcellularLocation>
</comment>
<comment type="induction">
    <text evidence="2">Expressed in the early phase of the viral replicative cycle.</text>
</comment>
<comment type="similarity">
    <text evidence="5">Belongs to the orthopoxvirus OPG019 family.</text>
</comment>
<keyword id="KW-1015">Disulfide bond</keyword>
<keyword id="KW-0244">Early protein</keyword>
<keyword id="KW-0245">EGF-like domain</keyword>
<keyword id="KW-0325">Glycoprotein</keyword>
<keyword id="KW-0339">Growth factor</keyword>
<keyword id="KW-1043">Host membrane</keyword>
<keyword id="KW-0945">Host-virus interaction</keyword>
<keyword id="KW-0472">Membrane</keyword>
<keyword id="KW-0964">Secreted</keyword>
<keyword id="KW-0732">Signal</keyword>
<keyword id="KW-0812">Transmembrane</keyword>
<keyword id="KW-1133">Transmembrane helix</keyword>
<gene>
    <name type="primary">OPG019</name>
</gene>
<reference key="1">
    <citation type="journal article" date="1992" name="Mol. Genet. Mikrobiol. Virusol.">
        <title>Cloning the gene for vaccinia virus strain L-IVP growth factor in Escherichia coli.</title>
        <authorList>
            <person name="Pak V.N."/>
            <person name="Raspopin V.V."/>
            <person name="Petrov V.S."/>
            <person name="Kurmanov R.K."/>
            <person name="Mamaeva N.V."/>
        </authorList>
    </citation>
    <scope>NUCLEOTIDE SEQUENCE [GENOMIC DNA]</scope>
</reference>
<organism>
    <name type="scientific">Vaccinia virus (strain L-IVP)</name>
    <name type="common">VACV</name>
    <dbReference type="NCBI Taxonomy" id="31531"/>
    <lineage>
        <taxon>Viruses</taxon>
        <taxon>Varidnaviria</taxon>
        <taxon>Bamfordvirae</taxon>
        <taxon>Nucleocytoviricota</taxon>
        <taxon>Pokkesviricetes</taxon>
        <taxon>Chitovirales</taxon>
        <taxon>Poxviridae</taxon>
        <taxon>Chordopoxvirinae</taxon>
        <taxon>Orthopoxvirus</taxon>
        <taxon>Vaccinia virus</taxon>
    </lineage>
</organism>
<dbReference type="EMBL" id="S61049">
    <property type="protein sequence ID" value="AAB26161.1"/>
    <property type="molecule type" value="Genomic_DNA"/>
</dbReference>
<dbReference type="SMR" id="Q86607"/>
<dbReference type="GlyCosmos" id="Q86607">
    <property type="glycosylation" value="2 sites, No reported glycans"/>
</dbReference>
<dbReference type="GO" id="GO:0005615">
    <property type="term" value="C:extracellular space"/>
    <property type="evidence" value="ECO:0007669"/>
    <property type="project" value="TreeGrafter"/>
</dbReference>
<dbReference type="GO" id="GO:0033644">
    <property type="term" value="C:host cell membrane"/>
    <property type="evidence" value="ECO:0007669"/>
    <property type="project" value="UniProtKB-SubCell"/>
</dbReference>
<dbReference type="GO" id="GO:0016020">
    <property type="term" value="C:membrane"/>
    <property type="evidence" value="ECO:0007669"/>
    <property type="project" value="UniProtKB-KW"/>
</dbReference>
<dbReference type="GO" id="GO:0005154">
    <property type="term" value="F:epidermal growth factor receptor binding"/>
    <property type="evidence" value="ECO:0007669"/>
    <property type="project" value="InterPro"/>
</dbReference>
<dbReference type="GO" id="GO:0008083">
    <property type="term" value="F:growth factor activity"/>
    <property type="evidence" value="ECO:0007669"/>
    <property type="project" value="UniProtKB-KW"/>
</dbReference>
<dbReference type="GO" id="GO:0007173">
    <property type="term" value="P:epidermal growth factor receptor signaling pathway"/>
    <property type="evidence" value="ECO:0007669"/>
    <property type="project" value="TreeGrafter"/>
</dbReference>
<dbReference type="GO" id="GO:0008284">
    <property type="term" value="P:positive regulation of cell population proliferation"/>
    <property type="evidence" value="ECO:0007669"/>
    <property type="project" value="TreeGrafter"/>
</dbReference>
<dbReference type="GO" id="GO:0045840">
    <property type="term" value="P:positive regulation of mitotic nuclear division"/>
    <property type="evidence" value="ECO:0007669"/>
    <property type="project" value="TreeGrafter"/>
</dbReference>
<dbReference type="Gene3D" id="2.10.25.10">
    <property type="entry name" value="Laminin"/>
    <property type="match status" value="1"/>
</dbReference>
<dbReference type="InterPro" id="IPR000742">
    <property type="entry name" value="EGF-like_dom"/>
</dbReference>
<dbReference type="InterPro" id="IPR011170">
    <property type="entry name" value="GF_C11R"/>
</dbReference>
<dbReference type="PANTHER" id="PTHR10740:SF11">
    <property type="entry name" value="PROEPIREGULIN"/>
    <property type="match status" value="1"/>
</dbReference>
<dbReference type="PANTHER" id="PTHR10740">
    <property type="entry name" value="TRANSFORMING GROWTH FACTOR ALPHA"/>
    <property type="match status" value="1"/>
</dbReference>
<dbReference type="PIRSF" id="PIRSF001779">
    <property type="entry name" value="GF_C11R"/>
    <property type="match status" value="1"/>
</dbReference>
<dbReference type="PRINTS" id="PR00009">
    <property type="entry name" value="EGFTGF"/>
</dbReference>
<dbReference type="SUPFAM" id="SSF57196">
    <property type="entry name" value="EGF/Laminin"/>
    <property type="match status" value="1"/>
</dbReference>
<dbReference type="PROSITE" id="PS00022">
    <property type="entry name" value="EGF_1"/>
    <property type="match status" value="1"/>
</dbReference>
<dbReference type="PROSITE" id="PS01186">
    <property type="entry name" value="EGF_2"/>
    <property type="match status" value="1"/>
</dbReference>
<dbReference type="PROSITE" id="PS50026">
    <property type="entry name" value="EGF_3"/>
    <property type="match status" value="1"/>
</dbReference>
<name>VGF_VACCP</name>
<organismHost>
    <name type="scientific">Homo sapiens</name>
    <name type="common">Human</name>
    <dbReference type="NCBI Taxonomy" id="9606"/>
</organismHost>
<protein>
    <recommendedName>
        <fullName>Pro-vaccinia growth factor</fullName>
        <shortName>Pro-VGF</shortName>
    </recommendedName>
    <component>
        <recommendedName>
            <fullName>Vaccinia growth factor</fullName>
            <shortName>VGF</shortName>
        </recommendedName>
        <alternativeName>
            <fullName>Secreted epidermal growth factor-like</fullName>
        </alternativeName>
    </component>
</protein>
<sequence>MSMKYLMLLFAAMIIRSFADSGNAIETTLPEITNATTDIPAIRLCGPEGDGYCLHGDCIHARDIDGMYCRCSHGYTGIRCQHVVLVDYQRSENPNTTTSYIPSPGIVLVLVGIIIITCCSLSVYRFTRRTKLPIQDMVVP</sequence>
<feature type="signal peptide" evidence="3">
    <location>
        <begin position="1"/>
        <end position="18"/>
    </location>
</feature>
<feature type="chain" id="PRO_0000007597" description="Pro-vaccinia growth factor">
    <location>
        <begin position="19"/>
        <end position="140"/>
    </location>
</feature>
<feature type="chain" id="PRO_0000412916" description="Vaccinia growth factor" evidence="3">
    <location>
        <begin position="19"/>
        <end position="96"/>
    </location>
</feature>
<feature type="topological domain" description="Extracellular" evidence="3">
    <location>
        <begin position="19"/>
        <end position="100"/>
    </location>
</feature>
<feature type="transmembrane region" description="Helical" evidence="3">
    <location>
        <begin position="101"/>
        <end position="121"/>
    </location>
</feature>
<feature type="topological domain" description="Cytoplasmic" evidence="3">
    <location>
        <begin position="122"/>
        <end position="140"/>
    </location>
</feature>
<feature type="domain" description="EGF-like" evidence="4">
    <location>
        <begin position="41"/>
        <end position="81"/>
    </location>
</feature>
<feature type="site" description="Cleavage (By host protease)" evidence="3">
    <location>
        <begin position="96"/>
        <end position="97"/>
    </location>
</feature>
<feature type="glycosylation site" description="N-linked (GlcNAc...) asparagine; by host" evidence="3">
    <location>
        <position position="34"/>
    </location>
</feature>
<feature type="glycosylation site" description="N-linked (GlcNAc...) asparagine; by host" evidence="3">
    <location>
        <position position="95"/>
    </location>
</feature>
<feature type="disulfide bond" evidence="4">
    <location>
        <begin position="45"/>
        <end position="58"/>
    </location>
</feature>
<feature type="disulfide bond" evidence="4">
    <location>
        <begin position="53"/>
        <end position="69"/>
    </location>
</feature>
<feature type="disulfide bond" evidence="4">
    <location>
        <begin position="71"/>
        <end position="80"/>
    </location>
</feature>
<evidence type="ECO:0000250" key="1"/>
<evidence type="ECO:0000250" key="2">
    <source>
        <dbReference type="UniProtKB" id="P01136"/>
    </source>
</evidence>
<evidence type="ECO:0000255" key="3"/>
<evidence type="ECO:0000255" key="4">
    <source>
        <dbReference type="PROSITE-ProRule" id="PRU00076"/>
    </source>
</evidence>
<evidence type="ECO:0000305" key="5"/>
<proteinExistence type="inferred from homology"/>